<sequence length="342" mass="38994">MISSRQKLILKAIIDMYSEKGEPVGSKALMALPYLNYSSATLRYDMAVLEELGFLEKMHTSSGRVPSERGYRYYIEHLVTRDNDVTEVFPLIDEVFSKKALGREHTIKEALKLLTDLTSYTAVAVGPDILQSHIKRIEMVPLGLKDAVMLIVTDTGHVQHQQIHISDDMRMDDIKEVIHTLDDLLKNRTLEDALKVLKEEYAISELNQFMSYQSQIIDSFIEAFSKFASDSFYLSGMTNAFEQPEFNDVSHMKRFIDMMDRREIVKLIGTAEGISVRFGSDMEIKPLNQMTIISIPYQIDSKQKGTIALVGPSRMSYQKVIPLLEYIAANLAKLYKDNNKET</sequence>
<name>HRCA_ACHLA</name>
<feature type="chain" id="PRO_0000182436" description="Heat-inducible transcription repressor HrcA">
    <location>
        <begin position="1"/>
        <end position="342"/>
    </location>
</feature>
<organism>
    <name type="scientific">Acholeplasma laidlawii</name>
    <dbReference type="NCBI Taxonomy" id="2148"/>
    <lineage>
        <taxon>Bacteria</taxon>
        <taxon>Bacillati</taxon>
        <taxon>Mycoplasmatota</taxon>
        <taxon>Mollicutes</taxon>
        <taxon>Acholeplasmatales</taxon>
        <taxon>Acholeplasmataceae</taxon>
        <taxon>Acholeplasma</taxon>
    </lineage>
</organism>
<proteinExistence type="inferred from homology"/>
<keyword id="KW-0678">Repressor</keyword>
<keyword id="KW-0346">Stress response</keyword>
<keyword id="KW-0804">Transcription</keyword>
<keyword id="KW-0805">Transcription regulation</keyword>
<accession>Q8L3A0</accession>
<reference key="1">
    <citation type="submission" date="2000-06" db="EMBL/GenBank/DDBJ databases">
        <title>Cloning, sequencing and analysis of dnaK-operon from Acholeplasma laidlawii.</title>
        <authorList>
            <person name="Usoskin D.G."/>
            <person name="Vonski M.S."/>
            <person name="Drapchinskaya N.L."/>
            <person name="Borchsenius S.N."/>
        </authorList>
    </citation>
    <scope>NUCLEOTIDE SEQUENCE [GENOMIC DNA]</scope>
    <source>
        <strain>ATCC 23206 / DSM 23060 / NBRC 14400 / NCTC 10116 / PG-8</strain>
    </source>
</reference>
<dbReference type="EMBL" id="AF281816">
    <property type="protein sequence ID" value="AAM43820.1"/>
    <property type="molecule type" value="Genomic_DNA"/>
</dbReference>
<dbReference type="RefSeq" id="WP_012242497.1">
    <property type="nucleotide sequence ID" value="NZ_VKID01000001.1"/>
</dbReference>
<dbReference type="SMR" id="Q8L3A0"/>
<dbReference type="GeneID" id="41338726"/>
<dbReference type="OMA" id="GPKRMDY"/>
<dbReference type="GO" id="GO:0003677">
    <property type="term" value="F:DNA binding"/>
    <property type="evidence" value="ECO:0007669"/>
    <property type="project" value="InterPro"/>
</dbReference>
<dbReference type="GO" id="GO:0045892">
    <property type="term" value="P:negative regulation of DNA-templated transcription"/>
    <property type="evidence" value="ECO:0007669"/>
    <property type="project" value="UniProtKB-UniRule"/>
</dbReference>
<dbReference type="Gene3D" id="3.30.450.40">
    <property type="match status" value="1"/>
</dbReference>
<dbReference type="Gene3D" id="3.30.390.60">
    <property type="entry name" value="Heat-inducible transcription repressor hrca homolog, domain 3"/>
    <property type="match status" value="1"/>
</dbReference>
<dbReference type="Gene3D" id="1.10.10.10">
    <property type="entry name" value="Winged helix-like DNA-binding domain superfamily/Winged helix DNA-binding domain"/>
    <property type="match status" value="1"/>
</dbReference>
<dbReference type="HAMAP" id="MF_00081">
    <property type="entry name" value="HrcA"/>
    <property type="match status" value="1"/>
</dbReference>
<dbReference type="InterPro" id="IPR029016">
    <property type="entry name" value="GAF-like_dom_sf"/>
</dbReference>
<dbReference type="InterPro" id="IPR002571">
    <property type="entry name" value="HrcA"/>
</dbReference>
<dbReference type="InterPro" id="IPR021153">
    <property type="entry name" value="HrcA_C"/>
</dbReference>
<dbReference type="InterPro" id="IPR036388">
    <property type="entry name" value="WH-like_DNA-bd_sf"/>
</dbReference>
<dbReference type="InterPro" id="IPR036390">
    <property type="entry name" value="WH_DNA-bd_sf"/>
</dbReference>
<dbReference type="InterPro" id="IPR023120">
    <property type="entry name" value="WHTH_transcript_rep_HrcA_IDD"/>
</dbReference>
<dbReference type="NCBIfam" id="TIGR00331">
    <property type="entry name" value="hrcA"/>
    <property type="match status" value="1"/>
</dbReference>
<dbReference type="PANTHER" id="PTHR34824">
    <property type="entry name" value="HEAT-INDUCIBLE TRANSCRIPTION REPRESSOR HRCA"/>
    <property type="match status" value="1"/>
</dbReference>
<dbReference type="PANTHER" id="PTHR34824:SF1">
    <property type="entry name" value="HEAT-INDUCIBLE TRANSCRIPTION REPRESSOR HRCA"/>
    <property type="match status" value="1"/>
</dbReference>
<dbReference type="Pfam" id="PF01628">
    <property type="entry name" value="HrcA"/>
    <property type="match status" value="1"/>
</dbReference>
<dbReference type="PIRSF" id="PIRSF005485">
    <property type="entry name" value="HrcA"/>
    <property type="match status" value="1"/>
</dbReference>
<dbReference type="SUPFAM" id="SSF55781">
    <property type="entry name" value="GAF domain-like"/>
    <property type="match status" value="1"/>
</dbReference>
<dbReference type="SUPFAM" id="SSF46785">
    <property type="entry name" value="Winged helix' DNA-binding domain"/>
    <property type="match status" value="1"/>
</dbReference>
<evidence type="ECO:0000255" key="1">
    <source>
        <dbReference type="HAMAP-Rule" id="MF_00081"/>
    </source>
</evidence>
<gene>
    <name evidence="1" type="primary">hrcA</name>
</gene>
<protein>
    <recommendedName>
        <fullName evidence="1">Heat-inducible transcription repressor HrcA</fullName>
    </recommendedName>
</protein>
<comment type="function">
    <text evidence="1">Negative regulator of class I heat shock genes (grpE-dnaK-dnaJ and groELS operons). Prevents heat-shock induction of these operons.</text>
</comment>
<comment type="similarity">
    <text evidence="1">Belongs to the HrcA family.</text>
</comment>